<evidence type="ECO:0000255" key="1">
    <source>
        <dbReference type="PROSITE-ProRule" id="PRU00434"/>
    </source>
</evidence>
<evidence type="ECO:0000305" key="2"/>
<accession>P75264</accession>
<proteinExistence type="evidence at protein level"/>
<dbReference type="EMBL" id="U00089">
    <property type="protein sequence ID" value="AAB95668.1"/>
    <property type="molecule type" value="Genomic_DNA"/>
</dbReference>
<dbReference type="PIR" id="S73346">
    <property type="entry name" value="S73346"/>
</dbReference>
<dbReference type="RefSeq" id="NP_109822.1">
    <property type="nucleotide sequence ID" value="NC_000912.1"/>
</dbReference>
<dbReference type="RefSeq" id="WP_010874491.1">
    <property type="nucleotide sequence ID" value="NZ_OU342337.1"/>
</dbReference>
<dbReference type="IntAct" id="P75264">
    <property type="interactions" value="1"/>
</dbReference>
<dbReference type="STRING" id="272634.MPN_134"/>
<dbReference type="EnsemblBacteria" id="AAB95668">
    <property type="protein sequence ID" value="AAB95668"/>
    <property type="gene ID" value="MPN_134"/>
</dbReference>
<dbReference type="KEGG" id="mpn:MPN_134"/>
<dbReference type="PATRIC" id="fig|272634.6.peg.148"/>
<dbReference type="HOGENOM" id="CLU_000604_72_2_14"/>
<dbReference type="OrthoDB" id="9784450at2"/>
<dbReference type="BioCyc" id="MPNE272634:G1GJ3-227-MONOMER"/>
<dbReference type="Proteomes" id="UP000000808">
    <property type="component" value="Chromosome"/>
</dbReference>
<dbReference type="GO" id="GO:0055052">
    <property type="term" value="C:ATP-binding cassette (ABC) transporter complex, substrate-binding subunit-containing"/>
    <property type="evidence" value="ECO:0007669"/>
    <property type="project" value="TreeGrafter"/>
</dbReference>
<dbReference type="GO" id="GO:0005524">
    <property type="term" value="F:ATP binding"/>
    <property type="evidence" value="ECO:0007669"/>
    <property type="project" value="UniProtKB-KW"/>
</dbReference>
<dbReference type="GO" id="GO:0016887">
    <property type="term" value="F:ATP hydrolysis activity"/>
    <property type="evidence" value="ECO:0007669"/>
    <property type="project" value="InterPro"/>
</dbReference>
<dbReference type="FunFam" id="3.40.50.300:FF:006170">
    <property type="entry name" value="Putative ABC transporter ATP-binding protein MG187"/>
    <property type="match status" value="1"/>
</dbReference>
<dbReference type="Gene3D" id="2.40.50.100">
    <property type="match status" value="1"/>
</dbReference>
<dbReference type="Gene3D" id="2.40.50.140">
    <property type="entry name" value="Nucleic acid-binding proteins"/>
    <property type="match status" value="1"/>
</dbReference>
<dbReference type="Gene3D" id="3.40.50.300">
    <property type="entry name" value="P-loop containing nucleotide triphosphate hydrolases"/>
    <property type="match status" value="2"/>
</dbReference>
<dbReference type="InterPro" id="IPR003593">
    <property type="entry name" value="AAA+_ATPase"/>
</dbReference>
<dbReference type="InterPro" id="IPR003439">
    <property type="entry name" value="ABC_transporter-like_ATP-bd"/>
</dbReference>
<dbReference type="InterPro" id="IPR017871">
    <property type="entry name" value="ABC_transporter-like_CS"/>
</dbReference>
<dbReference type="InterPro" id="IPR047641">
    <property type="entry name" value="ABC_transpr_MalK/UgpC-like"/>
</dbReference>
<dbReference type="InterPro" id="IPR008995">
    <property type="entry name" value="Mo/tungstate-bd_C_term_dom"/>
</dbReference>
<dbReference type="InterPro" id="IPR012340">
    <property type="entry name" value="NA-bd_OB-fold"/>
</dbReference>
<dbReference type="InterPro" id="IPR027417">
    <property type="entry name" value="P-loop_NTPase"/>
</dbReference>
<dbReference type="PANTHER" id="PTHR43875">
    <property type="entry name" value="MALTODEXTRIN IMPORT ATP-BINDING PROTEIN MSMX"/>
    <property type="match status" value="1"/>
</dbReference>
<dbReference type="PANTHER" id="PTHR43875:SF1">
    <property type="entry name" value="OSMOPROTECTIVE COMPOUNDS UPTAKE ATP-BINDING PROTEIN GGTA"/>
    <property type="match status" value="1"/>
</dbReference>
<dbReference type="Pfam" id="PF00005">
    <property type="entry name" value="ABC_tran"/>
    <property type="match status" value="1"/>
</dbReference>
<dbReference type="SMART" id="SM00382">
    <property type="entry name" value="AAA"/>
    <property type="match status" value="1"/>
</dbReference>
<dbReference type="SUPFAM" id="SSF50331">
    <property type="entry name" value="MOP-like"/>
    <property type="match status" value="1"/>
</dbReference>
<dbReference type="SUPFAM" id="SSF52540">
    <property type="entry name" value="P-loop containing nucleoside triphosphate hydrolases"/>
    <property type="match status" value="1"/>
</dbReference>
<dbReference type="PROSITE" id="PS00211">
    <property type="entry name" value="ABC_TRANSPORTER_1"/>
    <property type="match status" value="1"/>
</dbReference>
<dbReference type="PROSITE" id="PS50893">
    <property type="entry name" value="ABC_TRANSPORTER_2"/>
    <property type="match status" value="1"/>
</dbReference>
<protein>
    <recommendedName>
        <fullName>Putative ABC transporter ATP-binding protein MG187 homolog</fullName>
    </recommendedName>
</protein>
<feature type="chain" id="PRO_0000093242" description="Putative ABC transporter ATP-binding protein MG187 homolog">
    <location>
        <begin position="1"/>
        <end position="586"/>
    </location>
</feature>
<feature type="domain" description="ABC transporter" evidence="1">
    <location>
        <begin position="13"/>
        <end position="464"/>
    </location>
</feature>
<feature type="binding site" evidence="1">
    <location>
        <begin position="45"/>
        <end position="52"/>
    </location>
    <ligand>
        <name>ATP</name>
        <dbReference type="ChEBI" id="CHEBI:30616"/>
    </ligand>
</feature>
<keyword id="KW-0067">ATP-binding</keyword>
<keyword id="KW-0547">Nucleotide-binding</keyword>
<keyword id="KW-1185">Reference proteome</keyword>
<keyword id="KW-0813">Transport</keyword>
<reference key="1">
    <citation type="journal article" date="1996" name="Nucleic Acids Res.">
        <title>Complete sequence analysis of the genome of the bacterium Mycoplasma pneumoniae.</title>
        <authorList>
            <person name="Himmelreich R."/>
            <person name="Hilbert H."/>
            <person name="Plagens H."/>
            <person name="Pirkl E."/>
            <person name="Li B.-C."/>
            <person name="Herrmann R."/>
        </authorList>
    </citation>
    <scope>NUCLEOTIDE SEQUENCE [LARGE SCALE GENOMIC DNA]</scope>
    <source>
        <strain>ATCC 29342 / M129 / Subtype 1</strain>
    </source>
</reference>
<reference key="2">
    <citation type="journal article" date="2000" name="Electrophoresis">
        <title>Towards a two-dimensional proteome map of Mycoplasma pneumoniae.</title>
        <authorList>
            <person name="Regula J.T."/>
            <person name="Ueberle B."/>
            <person name="Boguth G."/>
            <person name="Goerg A."/>
            <person name="Schnoelzer M."/>
            <person name="Herrmann R."/>
            <person name="Frank R."/>
        </authorList>
    </citation>
    <scope>IDENTIFICATION BY MASS SPECTROMETRY</scope>
    <source>
        <strain>ATCC 29342 / M129 / Subtype 1</strain>
    </source>
</reference>
<sequence length="586" mass="66464">MEKIQAEKSQSAIEFKNIVVDFGESIAIDNINLTVKKKELVTLLGPSGCGKTTSLSVIAGLIAPTSGQVLFNGYDVTKKPPQQRKLGLVFQNYALYPHMSVFENIVFPLYSDTSWREAIFEKNTWAQHDINCLILKANGATSEELAELNRLMQQRIDEPKRMAYQINDLMVSVFQKQSELEANLKLIPRKKQFAIISLSKETLSQIRDVETKAKAALETADSAEVEQTIKSELKQKLSEIKANYHDEKANIKAYWWEMLANIKTELKTEKTAIKQTNDYAKLKELKWKIHFEPLNLKKQYRSYFKQLKAKYSLKDGNLTESELSQIEELQKRIVSLKDFINRTAKEVAEKLEITKILHKRPANISGGQQQRVAIARAIVRRPKVLLMDEPLSNLDAKLRVQTRQWIRKFQQDLQITTVFVTHDQEEAMSISDTIVCMSTGKVQQIGSPSELYLKPANEFVATFLGSPEMNIVNATVKAGQLLWNENPLVKTKFDLPDGAIRVGFRYDEVTAPKNDGSPVFSGTLISVENLGKHMVGVVESNGVQLNVRLELSHQFEVGNAVKFTIKPNGLHFFDPQTTQRVEVKHV</sequence>
<gene>
    <name type="ordered locus">MPN_134</name>
    <name type="ORF">E07_orf586</name>
    <name type="ORF">MP020</name>
</gene>
<comment type="similarity">
    <text evidence="2">Belongs to the ABC transporter superfamily.</text>
</comment>
<name>Y134_MYCPN</name>
<organism>
    <name type="scientific">Mycoplasma pneumoniae (strain ATCC 29342 / M129 / Subtype 1)</name>
    <name type="common">Mycoplasmoides pneumoniae</name>
    <dbReference type="NCBI Taxonomy" id="272634"/>
    <lineage>
        <taxon>Bacteria</taxon>
        <taxon>Bacillati</taxon>
        <taxon>Mycoplasmatota</taxon>
        <taxon>Mycoplasmoidales</taxon>
        <taxon>Mycoplasmoidaceae</taxon>
        <taxon>Mycoplasmoides</taxon>
    </lineage>
</organism>